<gene>
    <name type="ordered locus">cce_1753</name>
</gene>
<name>RRP3_CROS5</name>
<proteinExistence type="inferred from homology"/>
<dbReference type="EMBL" id="CP000806">
    <property type="protein sequence ID" value="ACB51103.1"/>
    <property type="molecule type" value="Genomic_DNA"/>
</dbReference>
<dbReference type="SMR" id="B1WYT6"/>
<dbReference type="STRING" id="43989.cce_1753"/>
<dbReference type="KEGG" id="cyt:cce_1753"/>
<dbReference type="eggNOG" id="ENOG503137T">
    <property type="taxonomic scope" value="Bacteria"/>
</dbReference>
<dbReference type="HOGENOM" id="CLU_132693_1_0_3"/>
<dbReference type="Proteomes" id="UP000001203">
    <property type="component" value="Chromosome circular"/>
</dbReference>
<dbReference type="GO" id="GO:1990904">
    <property type="term" value="C:ribonucleoprotein complex"/>
    <property type="evidence" value="ECO:0007669"/>
    <property type="project" value="UniProtKB-KW"/>
</dbReference>
<dbReference type="GO" id="GO:0005840">
    <property type="term" value="C:ribosome"/>
    <property type="evidence" value="ECO:0007669"/>
    <property type="project" value="UniProtKB-KW"/>
</dbReference>
<dbReference type="GO" id="GO:0003735">
    <property type="term" value="F:structural constituent of ribosome"/>
    <property type="evidence" value="ECO:0007669"/>
    <property type="project" value="InterPro"/>
</dbReference>
<dbReference type="GO" id="GO:0006412">
    <property type="term" value="P:translation"/>
    <property type="evidence" value="ECO:0007669"/>
    <property type="project" value="UniProtKB-UniRule"/>
</dbReference>
<dbReference type="Gene3D" id="3.30.390.140">
    <property type="match status" value="1"/>
</dbReference>
<dbReference type="HAMAP" id="MF_00619">
    <property type="entry name" value="Ribosomal_plastid_cS23"/>
    <property type="match status" value="1"/>
</dbReference>
<dbReference type="InterPro" id="IPR038447">
    <property type="entry name" value="PSRP-3/Ycf65_sf"/>
</dbReference>
<dbReference type="InterPro" id="IPR006924">
    <property type="entry name" value="Ribosomal_PSRP3/Ycf65"/>
</dbReference>
<dbReference type="NCBIfam" id="NF002740">
    <property type="entry name" value="PRK02724.1"/>
    <property type="match status" value="1"/>
</dbReference>
<dbReference type="PANTHER" id="PTHR35108">
    <property type="entry name" value="30S RIBOSOMAL PROTEIN 3, CHLOROPLASTIC"/>
    <property type="match status" value="1"/>
</dbReference>
<dbReference type="PANTHER" id="PTHR35108:SF1">
    <property type="entry name" value="OS04G0461100 PROTEIN"/>
    <property type="match status" value="1"/>
</dbReference>
<dbReference type="Pfam" id="PF04839">
    <property type="entry name" value="PSRP-3_Ycf65"/>
    <property type="match status" value="1"/>
</dbReference>
<evidence type="ECO:0000255" key="1">
    <source>
        <dbReference type="HAMAP-Rule" id="MF_00619"/>
    </source>
</evidence>
<comment type="function">
    <text evidence="1">Probably a ribosomal protein or a ribosome-associated protein.</text>
</comment>
<comment type="subunit">
    <text evidence="1">Part of the 30S ribosomal subunit.</text>
</comment>
<comment type="similarity">
    <text evidence="1">Belongs to the chloroplast-specific ribosomal protein cS23 family.</text>
</comment>
<feature type="chain" id="PRO_1000200332" description="Probable small ribosomal subunit protein cS23">
    <location>
        <begin position="1"/>
        <end position="112"/>
    </location>
</feature>
<accession>B1WYT6</accession>
<organism>
    <name type="scientific">Crocosphaera subtropica (strain ATCC 51142 / BH68)</name>
    <name type="common">Cyanothece sp. (strain ATCC 51142)</name>
    <dbReference type="NCBI Taxonomy" id="43989"/>
    <lineage>
        <taxon>Bacteria</taxon>
        <taxon>Bacillati</taxon>
        <taxon>Cyanobacteriota</taxon>
        <taxon>Cyanophyceae</taxon>
        <taxon>Oscillatoriophycideae</taxon>
        <taxon>Chroococcales</taxon>
        <taxon>Aphanothecaceae</taxon>
        <taxon>Crocosphaera</taxon>
        <taxon>Crocosphaera subtropica</taxon>
    </lineage>
</organism>
<sequence>MSFIQLEGQLEPRFILKVLWLDANVAIAVDQVVGKGTSPLTAYFFWPRNDAWQELKDELEAKHWILETERIEILNKATEVINYWQDLRNQGKSITMKEAQSKFPEVTFSGSN</sequence>
<protein>
    <recommendedName>
        <fullName evidence="1">Probable small ribosomal subunit protein cS23</fullName>
    </recommendedName>
    <alternativeName>
        <fullName>Probable 30S ribosomal protein PSRP-3</fullName>
    </alternativeName>
    <alternativeName>
        <fullName>Ycf65-like protein</fullName>
    </alternativeName>
</protein>
<reference key="1">
    <citation type="journal article" date="2008" name="Proc. Natl. Acad. Sci. U.S.A.">
        <title>The genome of Cyanothece 51142, a unicellular diazotrophic cyanobacterium important in the marine nitrogen cycle.</title>
        <authorList>
            <person name="Welsh E.A."/>
            <person name="Liberton M."/>
            <person name="Stoeckel J."/>
            <person name="Loh T."/>
            <person name="Elvitigala T."/>
            <person name="Wang C."/>
            <person name="Wollam A."/>
            <person name="Fulton R.S."/>
            <person name="Clifton S.W."/>
            <person name="Jacobs J.M."/>
            <person name="Aurora R."/>
            <person name="Ghosh B.K."/>
            <person name="Sherman L.A."/>
            <person name="Smith R.D."/>
            <person name="Wilson R.K."/>
            <person name="Pakrasi H.B."/>
        </authorList>
    </citation>
    <scope>NUCLEOTIDE SEQUENCE [LARGE SCALE GENOMIC DNA]</scope>
    <source>
        <strain>ATCC 51142 / BH68</strain>
    </source>
</reference>
<keyword id="KW-1185">Reference proteome</keyword>
<keyword id="KW-0687">Ribonucleoprotein</keyword>
<keyword id="KW-0689">Ribosomal protein</keyword>